<dbReference type="EC" id="4.1.1.37" evidence="1"/>
<dbReference type="EMBL" id="CP001089">
    <property type="protein sequence ID" value="ACD96951.1"/>
    <property type="molecule type" value="Genomic_DNA"/>
</dbReference>
<dbReference type="RefSeq" id="WP_012471275.1">
    <property type="nucleotide sequence ID" value="NC_010814.1"/>
</dbReference>
<dbReference type="SMR" id="B3EAR8"/>
<dbReference type="STRING" id="398767.Glov_3245"/>
<dbReference type="KEGG" id="glo:Glov_3245"/>
<dbReference type="eggNOG" id="COG0407">
    <property type="taxonomic scope" value="Bacteria"/>
</dbReference>
<dbReference type="HOGENOM" id="CLU_040933_0_0_7"/>
<dbReference type="OrthoDB" id="9806656at2"/>
<dbReference type="UniPathway" id="UPA00251">
    <property type="reaction ID" value="UER00321"/>
</dbReference>
<dbReference type="Proteomes" id="UP000002420">
    <property type="component" value="Chromosome"/>
</dbReference>
<dbReference type="GO" id="GO:0005829">
    <property type="term" value="C:cytosol"/>
    <property type="evidence" value="ECO:0007669"/>
    <property type="project" value="TreeGrafter"/>
</dbReference>
<dbReference type="GO" id="GO:0004853">
    <property type="term" value="F:uroporphyrinogen decarboxylase activity"/>
    <property type="evidence" value="ECO:0007669"/>
    <property type="project" value="UniProtKB-UniRule"/>
</dbReference>
<dbReference type="GO" id="GO:0019353">
    <property type="term" value="P:protoporphyrinogen IX biosynthetic process from glutamate"/>
    <property type="evidence" value="ECO:0007669"/>
    <property type="project" value="TreeGrafter"/>
</dbReference>
<dbReference type="CDD" id="cd00717">
    <property type="entry name" value="URO-D"/>
    <property type="match status" value="1"/>
</dbReference>
<dbReference type="FunFam" id="3.20.20.210:FF:000015">
    <property type="entry name" value="Uroporphyrinogen decarboxylase"/>
    <property type="match status" value="1"/>
</dbReference>
<dbReference type="Gene3D" id="3.20.20.210">
    <property type="match status" value="1"/>
</dbReference>
<dbReference type="HAMAP" id="MF_00218">
    <property type="entry name" value="URO_D"/>
    <property type="match status" value="1"/>
</dbReference>
<dbReference type="InterPro" id="IPR038071">
    <property type="entry name" value="UROD/MetE-like_sf"/>
</dbReference>
<dbReference type="InterPro" id="IPR006361">
    <property type="entry name" value="Uroporphyrinogen_deCO2ase_HemE"/>
</dbReference>
<dbReference type="InterPro" id="IPR000257">
    <property type="entry name" value="Uroporphyrinogen_deCOase"/>
</dbReference>
<dbReference type="NCBIfam" id="TIGR01464">
    <property type="entry name" value="hemE"/>
    <property type="match status" value="1"/>
</dbReference>
<dbReference type="PANTHER" id="PTHR21091">
    <property type="entry name" value="METHYLTETRAHYDROFOLATE:HOMOCYSTEINE METHYLTRANSFERASE RELATED"/>
    <property type="match status" value="1"/>
</dbReference>
<dbReference type="PANTHER" id="PTHR21091:SF169">
    <property type="entry name" value="UROPORPHYRINOGEN DECARBOXYLASE"/>
    <property type="match status" value="1"/>
</dbReference>
<dbReference type="Pfam" id="PF01208">
    <property type="entry name" value="URO-D"/>
    <property type="match status" value="1"/>
</dbReference>
<dbReference type="SUPFAM" id="SSF51726">
    <property type="entry name" value="UROD/MetE-like"/>
    <property type="match status" value="1"/>
</dbReference>
<dbReference type="PROSITE" id="PS00906">
    <property type="entry name" value="UROD_1"/>
    <property type="match status" value="1"/>
</dbReference>
<dbReference type="PROSITE" id="PS00907">
    <property type="entry name" value="UROD_2"/>
    <property type="match status" value="1"/>
</dbReference>
<sequence length="340" mass="37678">MNNRFLDACWGKPVDRTPVWLMRQAGRYLPEYMAVRSRCSFLELCKTPELAAEVTIQPVDILGVDAAILFSDILTPVEPMGLKLDFVPGPVFENPVRTMADVEKLRIPDPEADVPYVLQAIRILRKELAGKVPLIGFGGAPFTLACYMVEGKGSKDWATIKRMMYAAPDVYAALMEKVTMMDMEYLNAQIRAGAQAIQIFDTWGGVLSPTDYEKYVLPYTTKLINGLNRKETPVIHFVKGSGTMLPVVQKAGGDVMGLDWHINLGSARDILGPEMAVQGNLDPTTLYAPHAVIEQEVKRVLNENAGRPGHIFNLGHGILPTVPPENAKFMVDCVHRLSQR</sequence>
<proteinExistence type="inferred from homology"/>
<accession>B3EAR8</accession>
<evidence type="ECO:0000255" key="1">
    <source>
        <dbReference type="HAMAP-Rule" id="MF_00218"/>
    </source>
</evidence>
<reference key="1">
    <citation type="submission" date="2008-05" db="EMBL/GenBank/DDBJ databases">
        <title>Complete sequence of chromosome of Geobacter lovleyi SZ.</title>
        <authorList>
            <consortium name="US DOE Joint Genome Institute"/>
            <person name="Lucas S."/>
            <person name="Copeland A."/>
            <person name="Lapidus A."/>
            <person name="Glavina del Rio T."/>
            <person name="Dalin E."/>
            <person name="Tice H."/>
            <person name="Bruce D."/>
            <person name="Goodwin L."/>
            <person name="Pitluck S."/>
            <person name="Chertkov O."/>
            <person name="Meincke L."/>
            <person name="Brettin T."/>
            <person name="Detter J.C."/>
            <person name="Han C."/>
            <person name="Tapia R."/>
            <person name="Kuske C.R."/>
            <person name="Schmutz J."/>
            <person name="Larimer F."/>
            <person name="Land M."/>
            <person name="Hauser L."/>
            <person name="Kyrpides N."/>
            <person name="Mikhailova N."/>
            <person name="Sung Y."/>
            <person name="Fletcher K.E."/>
            <person name="Ritalahti K.M."/>
            <person name="Loeffler F.E."/>
            <person name="Richardson P."/>
        </authorList>
    </citation>
    <scope>NUCLEOTIDE SEQUENCE [LARGE SCALE GENOMIC DNA]</scope>
    <source>
        <strain>ATCC BAA-1151 / DSM 17278 / SZ</strain>
    </source>
</reference>
<keyword id="KW-0963">Cytoplasm</keyword>
<keyword id="KW-0210">Decarboxylase</keyword>
<keyword id="KW-0456">Lyase</keyword>
<keyword id="KW-0627">Porphyrin biosynthesis</keyword>
<keyword id="KW-1185">Reference proteome</keyword>
<comment type="function">
    <text evidence="1">Catalyzes the decarboxylation of four acetate groups of uroporphyrinogen-III to yield coproporphyrinogen-III.</text>
</comment>
<comment type="catalytic activity">
    <reaction evidence="1">
        <text>uroporphyrinogen III + 4 H(+) = coproporphyrinogen III + 4 CO2</text>
        <dbReference type="Rhea" id="RHEA:19865"/>
        <dbReference type="ChEBI" id="CHEBI:15378"/>
        <dbReference type="ChEBI" id="CHEBI:16526"/>
        <dbReference type="ChEBI" id="CHEBI:57308"/>
        <dbReference type="ChEBI" id="CHEBI:57309"/>
        <dbReference type="EC" id="4.1.1.37"/>
    </reaction>
</comment>
<comment type="pathway">
    <text evidence="1">Porphyrin-containing compound metabolism; protoporphyrin-IX biosynthesis; coproporphyrinogen-III from 5-aminolevulinate: step 4/4.</text>
</comment>
<comment type="subunit">
    <text evidence="1">Homodimer.</text>
</comment>
<comment type="subcellular location">
    <subcellularLocation>
        <location evidence="1">Cytoplasm</location>
    </subcellularLocation>
</comment>
<comment type="similarity">
    <text evidence="1">Belongs to the uroporphyrinogen decarboxylase family.</text>
</comment>
<feature type="chain" id="PRO_1000099995" description="Uroporphyrinogen decarboxylase">
    <location>
        <begin position="1"/>
        <end position="340"/>
    </location>
</feature>
<feature type="binding site" evidence="1">
    <location>
        <begin position="23"/>
        <end position="27"/>
    </location>
    <ligand>
        <name>substrate</name>
    </ligand>
</feature>
<feature type="binding site" evidence="1">
    <location>
        <position position="72"/>
    </location>
    <ligand>
        <name>substrate</name>
    </ligand>
</feature>
<feature type="binding site" evidence="1">
    <location>
        <position position="147"/>
    </location>
    <ligand>
        <name>substrate</name>
    </ligand>
</feature>
<feature type="binding site" evidence="1">
    <location>
        <position position="202"/>
    </location>
    <ligand>
        <name>substrate</name>
    </ligand>
</feature>
<feature type="binding site" evidence="1">
    <location>
        <position position="316"/>
    </location>
    <ligand>
        <name>substrate</name>
    </ligand>
</feature>
<feature type="site" description="Transition state stabilizer" evidence="1">
    <location>
        <position position="72"/>
    </location>
</feature>
<gene>
    <name evidence="1" type="primary">hemE</name>
    <name type="ordered locus">Glov_3245</name>
</gene>
<organism>
    <name type="scientific">Trichlorobacter lovleyi (strain ATCC BAA-1151 / DSM 17278 / SZ)</name>
    <name type="common">Geobacter lovleyi</name>
    <dbReference type="NCBI Taxonomy" id="398767"/>
    <lineage>
        <taxon>Bacteria</taxon>
        <taxon>Pseudomonadati</taxon>
        <taxon>Thermodesulfobacteriota</taxon>
        <taxon>Desulfuromonadia</taxon>
        <taxon>Geobacterales</taxon>
        <taxon>Geobacteraceae</taxon>
        <taxon>Trichlorobacter</taxon>
    </lineage>
</organism>
<protein>
    <recommendedName>
        <fullName evidence="1">Uroporphyrinogen decarboxylase</fullName>
        <shortName evidence="1">UPD</shortName>
        <shortName evidence="1">URO-D</shortName>
        <ecNumber evidence="1">4.1.1.37</ecNumber>
    </recommendedName>
</protein>
<name>DCUP_TRIL1</name>